<reference key="1">
    <citation type="journal article" date="1997" name="Nature">
        <title>The complete genome sequence of the hyperthermophilic, sulphate-reducing archaeon Archaeoglobus fulgidus.</title>
        <authorList>
            <person name="Klenk H.-P."/>
            <person name="Clayton R.A."/>
            <person name="Tomb J.-F."/>
            <person name="White O."/>
            <person name="Nelson K.E."/>
            <person name="Ketchum K.A."/>
            <person name="Dodson R.J."/>
            <person name="Gwinn M.L."/>
            <person name="Hickey E.K."/>
            <person name="Peterson J.D."/>
            <person name="Richardson D.L."/>
            <person name="Kerlavage A.R."/>
            <person name="Graham D.E."/>
            <person name="Kyrpides N.C."/>
            <person name="Fleischmann R.D."/>
            <person name="Quackenbush J."/>
            <person name="Lee N.H."/>
            <person name="Sutton G.G."/>
            <person name="Gill S.R."/>
            <person name="Kirkness E.F."/>
            <person name="Dougherty B.A."/>
            <person name="McKenney K."/>
            <person name="Adams M.D."/>
            <person name="Loftus B.J."/>
            <person name="Peterson S.N."/>
            <person name="Reich C.I."/>
            <person name="McNeil L.K."/>
            <person name="Badger J.H."/>
            <person name="Glodek A."/>
            <person name="Zhou L."/>
            <person name="Overbeek R."/>
            <person name="Gocayne J.D."/>
            <person name="Weidman J.F."/>
            <person name="McDonald L.A."/>
            <person name="Utterback T.R."/>
            <person name="Cotton M.D."/>
            <person name="Spriggs T."/>
            <person name="Artiach P."/>
            <person name="Kaine B.P."/>
            <person name="Sykes S.M."/>
            <person name="Sadow P.W."/>
            <person name="D'Andrea K.P."/>
            <person name="Bowman C."/>
            <person name="Fujii C."/>
            <person name="Garland S.A."/>
            <person name="Mason T.M."/>
            <person name="Olsen G.J."/>
            <person name="Fraser C.M."/>
            <person name="Smith H.O."/>
            <person name="Woese C.R."/>
            <person name="Venter J.C."/>
        </authorList>
    </citation>
    <scope>NUCLEOTIDE SEQUENCE [LARGE SCALE GENOMIC DNA]</scope>
    <source>
        <strain>ATCC 49558 / DSM 4304 / JCM 9628 / NBRC 100126 / VC-16</strain>
    </source>
</reference>
<protein>
    <recommendedName>
        <fullName>Uncharacterized protein AF_0789</fullName>
    </recommendedName>
</protein>
<dbReference type="EMBL" id="AE000782">
    <property type="protein sequence ID" value="AAB90457.1"/>
    <property type="molecule type" value="Genomic_DNA"/>
</dbReference>
<dbReference type="PIR" id="E69348">
    <property type="entry name" value="E69348"/>
</dbReference>
<dbReference type="RefSeq" id="WP_010878292.1">
    <property type="nucleotide sequence ID" value="NC_000917.1"/>
</dbReference>
<dbReference type="SMR" id="O29469"/>
<dbReference type="STRING" id="224325.AF_0789"/>
<dbReference type="PaxDb" id="224325-AF_0789"/>
<dbReference type="EnsemblBacteria" id="AAB90457">
    <property type="protein sequence ID" value="AAB90457"/>
    <property type="gene ID" value="AF_0789"/>
</dbReference>
<dbReference type="KEGG" id="afu:AF_0789"/>
<dbReference type="eggNOG" id="arCOG10225">
    <property type="taxonomic scope" value="Archaea"/>
</dbReference>
<dbReference type="HOGENOM" id="CLU_2243719_0_0_2"/>
<dbReference type="OrthoDB" id="49933at2157"/>
<dbReference type="Proteomes" id="UP000002199">
    <property type="component" value="Chromosome"/>
</dbReference>
<name>Y789_ARCFU</name>
<feature type="chain" id="PRO_0000127926" description="Uncharacterized protein AF_0789">
    <location>
        <begin position="1"/>
        <end position="108"/>
    </location>
</feature>
<organism>
    <name type="scientific">Archaeoglobus fulgidus (strain ATCC 49558 / DSM 4304 / JCM 9628 / NBRC 100126 / VC-16)</name>
    <dbReference type="NCBI Taxonomy" id="224325"/>
    <lineage>
        <taxon>Archaea</taxon>
        <taxon>Methanobacteriati</taxon>
        <taxon>Methanobacteriota</taxon>
        <taxon>Archaeoglobi</taxon>
        <taxon>Archaeoglobales</taxon>
        <taxon>Archaeoglobaceae</taxon>
        <taxon>Archaeoglobus</taxon>
    </lineage>
</organism>
<accession>O29469</accession>
<sequence>MGVHRITSEAAKYYAQREKVVGAGVSLLGEASMNLDKLSKEQLEKLGDLAAKLLPHSPGYAGKMMPIVARLFWRLAGVGEKEFGFAELDELEKEIERLKEELGFNSQQ</sequence>
<gene>
    <name type="ordered locus">AF_0789</name>
</gene>
<keyword id="KW-1185">Reference proteome</keyword>
<proteinExistence type="predicted"/>